<organism>
    <name type="scientific">Brucella melitensis biotype 2 (strain ATCC 23457)</name>
    <dbReference type="NCBI Taxonomy" id="546272"/>
    <lineage>
        <taxon>Bacteria</taxon>
        <taxon>Pseudomonadati</taxon>
        <taxon>Pseudomonadota</taxon>
        <taxon>Alphaproteobacteria</taxon>
        <taxon>Hyphomicrobiales</taxon>
        <taxon>Brucellaceae</taxon>
        <taxon>Brucella/Ochrobactrum group</taxon>
        <taxon>Brucella</taxon>
    </lineage>
</organism>
<sequence>MRSGVIAQKLGMTRVYNDAGEHVPVTVLRMENCHVVAQRTVEKNGYTAVQLGVGMAKVKNTSKAMRGHFAKAEVEPKAKLAEFRVSPDNLLEVGVEITAEHFVAGQKVDVTGTSIGKGFAGVMKRHNFGGHRASHGNSITHRSHGSTGQRQDPGKVFKGKKMAGHMGQTRVTTQNIEVVSTDSDRGLILVRGAVPGSKGAWILVRDAVKASLPENAPKPAGLRAGAKAEAAATEGGE</sequence>
<gene>
    <name evidence="1" type="primary">rplC</name>
    <name type="ordered locus">BMEA_A1278</name>
</gene>
<keyword id="KW-0488">Methylation</keyword>
<keyword id="KW-0687">Ribonucleoprotein</keyword>
<keyword id="KW-0689">Ribosomal protein</keyword>
<keyword id="KW-0694">RNA-binding</keyword>
<keyword id="KW-0699">rRNA-binding</keyword>
<proteinExistence type="inferred from homology"/>
<name>RL3_BRUMB</name>
<reference key="1">
    <citation type="submission" date="2009-03" db="EMBL/GenBank/DDBJ databases">
        <title>Brucella melitensis ATCC 23457 whole genome shotgun sequencing project.</title>
        <authorList>
            <person name="Setubal J.C."/>
            <person name="Boyle S."/>
            <person name="Crasta O.R."/>
            <person name="Gillespie J.J."/>
            <person name="Kenyon R.W."/>
            <person name="Lu J."/>
            <person name="Mane S."/>
            <person name="Nagrani S."/>
            <person name="Shallom J.M."/>
            <person name="Shallom S."/>
            <person name="Shukla M."/>
            <person name="Snyder E.E."/>
            <person name="Sobral B.W."/>
            <person name="Wattam A.R."/>
            <person name="Will R."/>
            <person name="Williams K."/>
            <person name="Yoo H."/>
            <person name="Munk C."/>
            <person name="Tapia R."/>
            <person name="Han C."/>
            <person name="Detter J.C."/>
            <person name="Bruce D."/>
            <person name="Brettin T.S."/>
        </authorList>
    </citation>
    <scope>NUCLEOTIDE SEQUENCE [LARGE SCALE GENOMIC DNA]</scope>
    <source>
        <strain>ATCC 23457</strain>
    </source>
</reference>
<protein>
    <recommendedName>
        <fullName evidence="1">Large ribosomal subunit protein uL3</fullName>
    </recommendedName>
    <alternativeName>
        <fullName evidence="3">50S ribosomal protein L3</fullName>
    </alternativeName>
</protein>
<accession>C0RJK1</accession>
<evidence type="ECO:0000255" key="1">
    <source>
        <dbReference type="HAMAP-Rule" id="MF_01325"/>
    </source>
</evidence>
<evidence type="ECO:0000256" key="2">
    <source>
        <dbReference type="SAM" id="MobiDB-lite"/>
    </source>
</evidence>
<evidence type="ECO:0000305" key="3"/>
<comment type="function">
    <text evidence="1">One of the primary rRNA binding proteins, it binds directly near the 3'-end of the 23S rRNA, where it nucleates assembly of the 50S subunit.</text>
</comment>
<comment type="subunit">
    <text evidence="1">Part of the 50S ribosomal subunit. Forms a cluster with proteins L14 and L19.</text>
</comment>
<comment type="PTM">
    <text evidence="1">Methylated by PrmB.</text>
</comment>
<comment type="similarity">
    <text evidence="1">Belongs to the universal ribosomal protein uL3 family.</text>
</comment>
<feature type="chain" id="PRO_1000165872" description="Large ribosomal subunit protein uL3">
    <location>
        <begin position="1"/>
        <end position="237"/>
    </location>
</feature>
<feature type="region of interest" description="Disordered" evidence="2">
    <location>
        <begin position="133"/>
        <end position="155"/>
    </location>
</feature>
<feature type="region of interest" description="Disordered" evidence="2">
    <location>
        <begin position="213"/>
        <end position="237"/>
    </location>
</feature>
<feature type="compositionally biased region" description="Polar residues" evidence="2">
    <location>
        <begin position="135"/>
        <end position="150"/>
    </location>
</feature>
<feature type="compositionally biased region" description="Low complexity" evidence="2">
    <location>
        <begin position="220"/>
        <end position="237"/>
    </location>
</feature>
<feature type="modified residue" description="N5-methylglutamine" evidence="1">
    <location>
        <position position="151"/>
    </location>
</feature>
<dbReference type="EMBL" id="CP001488">
    <property type="protein sequence ID" value="ACO01009.1"/>
    <property type="molecule type" value="Genomic_DNA"/>
</dbReference>
<dbReference type="RefSeq" id="WP_002964362.1">
    <property type="nucleotide sequence ID" value="NC_012441.1"/>
</dbReference>
<dbReference type="SMR" id="C0RJK1"/>
<dbReference type="GeneID" id="93016439"/>
<dbReference type="KEGG" id="bmi:BMEA_A1278"/>
<dbReference type="HOGENOM" id="CLU_044142_2_0_5"/>
<dbReference type="Proteomes" id="UP000001748">
    <property type="component" value="Chromosome I"/>
</dbReference>
<dbReference type="GO" id="GO:0022625">
    <property type="term" value="C:cytosolic large ribosomal subunit"/>
    <property type="evidence" value="ECO:0007669"/>
    <property type="project" value="TreeGrafter"/>
</dbReference>
<dbReference type="GO" id="GO:0019843">
    <property type="term" value="F:rRNA binding"/>
    <property type="evidence" value="ECO:0007669"/>
    <property type="project" value="UniProtKB-UniRule"/>
</dbReference>
<dbReference type="GO" id="GO:0003735">
    <property type="term" value="F:structural constituent of ribosome"/>
    <property type="evidence" value="ECO:0007669"/>
    <property type="project" value="InterPro"/>
</dbReference>
<dbReference type="GO" id="GO:0006412">
    <property type="term" value="P:translation"/>
    <property type="evidence" value="ECO:0007669"/>
    <property type="project" value="UniProtKB-UniRule"/>
</dbReference>
<dbReference type="FunFam" id="2.40.30.10:FF:000004">
    <property type="entry name" value="50S ribosomal protein L3"/>
    <property type="match status" value="1"/>
</dbReference>
<dbReference type="FunFam" id="3.30.160.810:FF:000001">
    <property type="entry name" value="50S ribosomal protein L3"/>
    <property type="match status" value="1"/>
</dbReference>
<dbReference type="Gene3D" id="3.30.160.810">
    <property type="match status" value="1"/>
</dbReference>
<dbReference type="Gene3D" id="2.40.30.10">
    <property type="entry name" value="Translation factors"/>
    <property type="match status" value="1"/>
</dbReference>
<dbReference type="HAMAP" id="MF_01325_B">
    <property type="entry name" value="Ribosomal_uL3_B"/>
    <property type="match status" value="1"/>
</dbReference>
<dbReference type="InterPro" id="IPR000597">
    <property type="entry name" value="Ribosomal_uL3"/>
</dbReference>
<dbReference type="InterPro" id="IPR019927">
    <property type="entry name" value="Ribosomal_uL3_bac/org-type"/>
</dbReference>
<dbReference type="InterPro" id="IPR019926">
    <property type="entry name" value="Ribosomal_uL3_CS"/>
</dbReference>
<dbReference type="InterPro" id="IPR009000">
    <property type="entry name" value="Transl_B-barrel_sf"/>
</dbReference>
<dbReference type="NCBIfam" id="TIGR03625">
    <property type="entry name" value="L3_bact"/>
    <property type="match status" value="1"/>
</dbReference>
<dbReference type="PANTHER" id="PTHR11229">
    <property type="entry name" value="50S RIBOSOMAL PROTEIN L3"/>
    <property type="match status" value="1"/>
</dbReference>
<dbReference type="PANTHER" id="PTHR11229:SF16">
    <property type="entry name" value="LARGE RIBOSOMAL SUBUNIT PROTEIN UL3C"/>
    <property type="match status" value="1"/>
</dbReference>
<dbReference type="Pfam" id="PF00297">
    <property type="entry name" value="Ribosomal_L3"/>
    <property type="match status" value="1"/>
</dbReference>
<dbReference type="SUPFAM" id="SSF50447">
    <property type="entry name" value="Translation proteins"/>
    <property type="match status" value="1"/>
</dbReference>
<dbReference type="PROSITE" id="PS00474">
    <property type="entry name" value="RIBOSOMAL_L3"/>
    <property type="match status" value="1"/>
</dbReference>